<accession>B9DNV9</accession>
<evidence type="ECO:0000255" key="1">
    <source>
        <dbReference type="HAMAP-Rule" id="MF_00195"/>
    </source>
</evidence>
<dbReference type="EMBL" id="AM295250">
    <property type="protein sequence ID" value="CAL28015.1"/>
    <property type="molecule type" value="Genomic_DNA"/>
</dbReference>
<dbReference type="RefSeq" id="WP_015900356.1">
    <property type="nucleotide sequence ID" value="NC_012121.1"/>
</dbReference>
<dbReference type="SMR" id="B9DNV9"/>
<dbReference type="GeneID" id="93793533"/>
<dbReference type="KEGG" id="sca:SCA_1107"/>
<dbReference type="eggNOG" id="COG1160">
    <property type="taxonomic scope" value="Bacteria"/>
</dbReference>
<dbReference type="HOGENOM" id="CLU_016077_6_2_9"/>
<dbReference type="OrthoDB" id="9805918at2"/>
<dbReference type="BioCyc" id="SCAR396513:SCA_RS05545-MONOMER"/>
<dbReference type="Proteomes" id="UP000000444">
    <property type="component" value="Chromosome"/>
</dbReference>
<dbReference type="GO" id="GO:0005525">
    <property type="term" value="F:GTP binding"/>
    <property type="evidence" value="ECO:0007669"/>
    <property type="project" value="UniProtKB-UniRule"/>
</dbReference>
<dbReference type="GO" id="GO:0043022">
    <property type="term" value="F:ribosome binding"/>
    <property type="evidence" value="ECO:0007669"/>
    <property type="project" value="TreeGrafter"/>
</dbReference>
<dbReference type="GO" id="GO:0042254">
    <property type="term" value="P:ribosome biogenesis"/>
    <property type="evidence" value="ECO:0007669"/>
    <property type="project" value="UniProtKB-KW"/>
</dbReference>
<dbReference type="CDD" id="cd01894">
    <property type="entry name" value="EngA1"/>
    <property type="match status" value="1"/>
</dbReference>
<dbReference type="CDD" id="cd01895">
    <property type="entry name" value="EngA2"/>
    <property type="match status" value="1"/>
</dbReference>
<dbReference type="FunFam" id="3.30.300.20:FF:000004">
    <property type="entry name" value="GTPase Der"/>
    <property type="match status" value="1"/>
</dbReference>
<dbReference type="FunFam" id="3.40.50.300:FF:000040">
    <property type="entry name" value="GTPase Der"/>
    <property type="match status" value="1"/>
</dbReference>
<dbReference type="FunFam" id="3.40.50.300:FF:000057">
    <property type="entry name" value="GTPase Der"/>
    <property type="match status" value="1"/>
</dbReference>
<dbReference type="Gene3D" id="3.30.300.20">
    <property type="match status" value="1"/>
</dbReference>
<dbReference type="Gene3D" id="3.40.50.300">
    <property type="entry name" value="P-loop containing nucleotide triphosphate hydrolases"/>
    <property type="match status" value="2"/>
</dbReference>
<dbReference type="HAMAP" id="MF_00195">
    <property type="entry name" value="GTPase_Der"/>
    <property type="match status" value="1"/>
</dbReference>
<dbReference type="InterPro" id="IPR031166">
    <property type="entry name" value="G_ENGA"/>
</dbReference>
<dbReference type="InterPro" id="IPR006073">
    <property type="entry name" value="GTP-bd"/>
</dbReference>
<dbReference type="InterPro" id="IPR016484">
    <property type="entry name" value="GTPase_Der"/>
</dbReference>
<dbReference type="InterPro" id="IPR032859">
    <property type="entry name" value="KH_dom-like"/>
</dbReference>
<dbReference type="InterPro" id="IPR015946">
    <property type="entry name" value="KH_dom-like_a/b"/>
</dbReference>
<dbReference type="InterPro" id="IPR027417">
    <property type="entry name" value="P-loop_NTPase"/>
</dbReference>
<dbReference type="InterPro" id="IPR005225">
    <property type="entry name" value="Small_GTP-bd"/>
</dbReference>
<dbReference type="NCBIfam" id="TIGR03594">
    <property type="entry name" value="GTPase_EngA"/>
    <property type="match status" value="1"/>
</dbReference>
<dbReference type="NCBIfam" id="TIGR00231">
    <property type="entry name" value="small_GTP"/>
    <property type="match status" value="2"/>
</dbReference>
<dbReference type="PANTHER" id="PTHR43834">
    <property type="entry name" value="GTPASE DER"/>
    <property type="match status" value="1"/>
</dbReference>
<dbReference type="PANTHER" id="PTHR43834:SF6">
    <property type="entry name" value="GTPASE DER"/>
    <property type="match status" value="1"/>
</dbReference>
<dbReference type="Pfam" id="PF14714">
    <property type="entry name" value="KH_dom-like"/>
    <property type="match status" value="1"/>
</dbReference>
<dbReference type="Pfam" id="PF01926">
    <property type="entry name" value="MMR_HSR1"/>
    <property type="match status" value="2"/>
</dbReference>
<dbReference type="PIRSF" id="PIRSF006485">
    <property type="entry name" value="GTP-binding_EngA"/>
    <property type="match status" value="1"/>
</dbReference>
<dbReference type="PRINTS" id="PR00326">
    <property type="entry name" value="GTP1OBG"/>
</dbReference>
<dbReference type="SUPFAM" id="SSF52540">
    <property type="entry name" value="P-loop containing nucleoside triphosphate hydrolases"/>
    <property type="match status" value="2"/>
</dbReference>
<dbReference type="PROSITE" id="PS51712">
    <property type="entry name" value="G_ENGA"/>
    <property type="match status" value="2"/>
</dbReference>
<comment type="function">
    <text evidence="1">GTPase that plays an essential role in the late steps of ribosome biogenesis.</text>
</comment>
<comment type="subunit">
    <text evidence="1">Associates with the 50S ribosomal subunit.</text>
</comment>
<comment type="similarity">
    <text evidence="1">Belongs to the TRAFAC class TrmE-Era-EngA-EngB-Septin-like GTPase superfamily. EngA (Der) GTPase family.</text>
</comment>
<organism>
    <name type="scientific">Staphylococcus carnosus (strain TM300)</name>
    <dbReference type="NCBI Taxonomy" id="396513"/>
    <lineage>
        <taxon>Bacteria</taxon>
        <taxon>Bacillati</taxon>
        <taxon>Bacillota</taxon>
        <taxon>Bacilli</taxon>
        <taxon>Bacillales</taxon>
        <taxon>Staphylococcaceae</taxon>
        <taxon>Staphylococcus</taxon>
    </lineage>
</organism>
<protein>
    <recommendedName>
        <fullName evidence="1">GTPase Der</fullName>
    </recommendedName>
    <alternativeName>
        <fullName evidence="1">GTP-binding protein EngA</fullName>
    </alternativeName>
</protein>
<reference key="1">
    <citation type="journal article" date="2009" name="Appl. Environ. Microbiol.">
        <title>Genome analysis of the meat starter culture bacterium Staphylococcus carnosus TM300.</title>
        <authorList>
            <person name="Rosenstein R."/>
            <person name="Nerz C."/>
            <person name="Biswas L."/>
            <person name="Resch A."/>
            <person name="Raddatz G."/>
            <person name="Schuster S.C."/>
            <person name="Goetz F."/>
        </authorList>
    </citation>
    <scope>NUCLEOTIDE SEQUENCE [LARGE SCALE GENOMIC DNA]</scope>
    <source>
        <strain>TM300</strain>
    </source>
</reference>
<keyword id="KW-0342">GTP-binding</keyword>
<keyword id="KW-0547">Nucleotide-binding</keyword>
<keyword id="KW-1185">Reference proteome</keyword>
<keyword id="KW-0677">Repeat</keyword>
<keyword id="KW-0690">Ribosome biogenesis</keyword>
<gene>
    <name evidence="1" type="primary">der</name>
    <name type="synonym">engA</name>
    <name type="ordered locus">Sca_1107</name>
</gene>
<feature type="chain" id="PRO_1000124371" description="GTPase Der">
    <location>
        <begin position="1"/>
        <end position="436"/>
    </location>
</feature>
<feature type="domain" description="EngA-type G 1">
    <location>
        <begin position="4"/>
        <end position="167"/>
    </location>
</feature>
<feature type="domain" description="EngA-type G 2">
    <location>
        <begin position="176"/>
        <end position="351"/>
    </location>
</feature>
<feature type="domain" description="KH-like" evidence="1">
    <location>
        <begin position="352"/>
        <end position="436"/>
    </location>
</feature>
<feature type="binding site" evidence="1">
    <location>
        <begin position="10"/>
        <end position="17"/>
    </location>
    <ligand>
        <name>GTP</name>
        <dbReference type="ChEBI" id="CHEBI:37565"/>
        <label>1</label>
    </ligand>
</feature>
<feature type="binding site" evidence="1">
    <location>
        <begin position="57"/>
        <end position="61"/>
    </location>
    <ligand>
        <name>GTP</name>
        <dbReference type="ChEBI" id="CHEBI:37565"/>
        <label>1</label>
    </ligand>
</feature>
<feature type="binding site" evidence="1">
    <location>
        <begin position="119"/>
        <end position="122"/>
    </location>
    <ligand>
        <name>GTP</name>
        <dbReference type="ChEBI" id="CHEBI:37565"/>
        <label>1</label>
    </ligand>
</feature>
<feature type="binding site" evidence="1">
    <location>
        <begin position="182"/>
        <end position="189"/>
    </location>
    <ligand>
        <name>GTP</name>
        <dbReference type="ChEBI" id="CHEBI:37565"/>
        <label>2</label>
    </ligand>
</feature>
<feature type="binding site" evidence="1">
    <location>
        <begin position="229"/>
        <end position="233"/>
    </location>
    <ligand>
        <name>GTP</name>
        <dbReference type="ChEBI" id="CHEBI:37565"/>
        <label>2</label>
    </ligand>
</feature>
<feature type="binding site" evidence="1">
    <location>
        <begin position="294"/>
        <end position="297"/>
    </location>
    <ligand>
        <name>GTP</name>
        <dbReference type="ChEBI" id="CHEBI:37565"/>
        <label>2</label>
    </ligand>
</feature>
<name>DER_STACT</name>
<proteinExistence type="inferred from homology"/>
<sequence length="436" mass="49194">MTKPVVAIVGRPNVGKSTIFNRIVGERVSIVEDTPGVTRDRIYSSGEWLTHDFNVIDTGGIELTDAPFQTQIRAQAEIAIDEADVIIFMVNQREGLTQTDEMIAQMLYKTNKPVVLAVNKVDNPEMRTDIYDFYALGFGEPFPISGSHGLGLGDLLDEVANNFKDEEDDDYDEDTIKLSLIGRPNVGKSSLVNAILGEDRVIVSNIAGTTRDAIDTEYSYEDQDYVLIDTAGMRKKGKVYESTEKYSVLRALKAIERSNVVLVVLDAEEGIIEQDKRVAGYAHEEGKAVVIVVNKWDTLDKDSKTMKKFEDKIRQEFQFLDYAPIAFVSAKEKQRLRTLFPLIKEASENHKKRVQSSTLNEVITDAISMNPTPTDKGRRLKVFYATQVAVEPPTFVVFVNDAELMHFSYKRYLENQIRDAFGFEGTPIRIIPRKRN</sequence>